<reference evidence="6" key="1">
    <citation type="journal article" date="1999" name="Biochem. Mol. Biol. Int.">
        <title>The amino acid sequence of ovocleidin 17, a major protein of the avian eggshell calcified layer.</title>
        <authorList>
            <person name="Mann K."/>
            <person name="Siedler F."/>
        </authorList>
    </citation>
    <scope>PROTEIN SEQUENCE</scope>
    <scope>MASS SPECTROMETRY</scope>
    <scope>DISULFIDE BONDS</scope>
    <scope>PHOSPHORYLATION AT SER-61 AND SER-67</scope>
    <source>
        <tissue evidence="3">Eggshell matrix</tissue>
    </source>
</reference>
<reference evidence="6" key="2">
    <citation type="journal article" date="1995" name="Calcif. Tissue Int.">
        <title>Purification and immunochemistry of a soluble matrix protein of the chicken eggshell (ovocleidin 17).</title>
        <authorList>
            <person name="Hincke M.T."/>
            <person name="Tsang C.P.W."/>
            <person name="Courtney M."/>
            <person name="Hill V."/>
            <person name="Narbaitz R."/>
        </authorList>
    </citation>
    <scope>PROTEIN SEQUENCE OF 1-24</scope>
    <scope>SUBCELLULAR LOCATION</scope>
    <scope>TISSUE SPECIFICITY</scope>
    <source>
        <tissue evidence="4">Eggshell matrix</tissue>
    </source>
</reference>
<reference evidence="6" key="3">
    <citation type="journal article" date="2002" name="Protein Pept. Lett.">
        <title>Crystallization and preliminary X-ray analysis of ovocleidin-17 a major protein of the Gallus gallus eggshell calcified layer.</title>
        <authorList>
            <person name="Reyes-Grajeda J.P."/>
            <person name="Jauregui-Zuniga D."/>
            <person name="Rodriguez-Romero A."/>
            <person name="Hernandez-Santoyo A."/>
            <person name="Bolanos-Garcia V.M."/>
            <person name="Moreno A."/>
        </authorList>
    </citation>
    <scope>X-RAY CRYSTALLOGRAPHY (1.5 ANGSTROMS)</scope>
</reference>
<accession>Q9PRS8</accession>
<protein>
    <recommendedName>
        <fullName>Ovocleidin-17</fullName>
        <shortName>OC-17</shortName>
    </recommendedName>
</protein>
<keyword id="KW-0002">3D-structure</keyword>
<keyword id="KW-0903">Direct protein sequencing</keyword>
<keyword id="KW-1015">Disulfide bond</keyword>
<keyword id="KW-0272">Extracellular matrix</keyword>
<keyword id="KW-0325">Glycoprotein</keyword>
<keyword id="KW-0430">Lectin</keyword>
<keyword id="KW-0597">Phosphoprotein</keyword>
<keyword id="KW-1185">Reference proteome</keyword>
<keyword id="KW-0964">Secreted</keyword>
<dbReference type="PDB" id="1GZ2">
    <property type="method" value="X-ray"/>
    <property type="resolution" value="1.50 A"/>
    <property type="chains" value="A=1-142"/>
</dbReference>
<dbReference type="PDBsum" id="1GZ2"/>
<dbReference type="SMR" id="Q9PRS8"/>
<dbReference type="FunCoup" id="Q9PRS8">
    <property type="interactions" value="16"/>
</dbReference>
<dbReference type="GlyGen" id="Q9PRS8">
    <property type="glycosylation" value="2 sites"/>
</dbReference>
<dbReference type="iPTMnet" id="Q9PRS8"/>
<dbReference type="VEuPathDB" id="HostDB:LOC121109246"/>
<dbReference type="InParanoid" id="Q9PRS8"/>
<dbReference type="PhylomeDB" id="Q9PRS8"/>
<dbReference type="EvolutionaryTrace" id="Q9PRS8"/>
<dbReference type="Proteomes" id="UP000000539">
    <property type="component" value="Unassembled WGS sequence"/>
</dbReference>
<dbReference type="GO" id="GO:0031012">
    <property type="term" value="C:extracellular matrix"/>
    <property type="evidence" value="ECO:0000314"/>
    <property type="project" value="AgBase"/>
</dbReference>
<dbReference type="GO" id="GO:0005576">
    <property type="term" value="C:extracellular region"/>
    <property type="evidence" value="ECO:0000314"/>
    <property type="project" value="AgBase"/>
</dbReference>
<dbReference type="GO" id="GO:0005615">
    <property type="term" value="C:extracellular space"/>
    <property type="evidence" value="ECO:0000314"/>
    <property type="project" value="AgBase"/>
</dbReference>
<dbReference type="GO" id="GO:1990377">
    <property type="term" value="C:organomineral extracellular matrix"/>
    <property type="evidence" value="ECO:0000314"/>
    <property type="project" value="AgBase"/>
</dbReference>
<dbReference type="GO" id="GO:0003823">
    <property type="term" value="F:antigen binding"/>
    <property type="evidence" value="ECO:0000314"/>
    <property type="project" value="AgBase"/>
</dbReference>
<dbReference type="GO" id="GO:0030246">
    <property type="term" value="F:carbohydrate binding"/>
    <property type="evidence" value="ECO:0007669"/>
    <property type="project" value="UniProtKB-KW"/>
</dbReference>
<dbReference type="GO" id="GO:1990430">
    <property type="term" value="F:extracellular matrix protein binding"/>
    <property type="evidence" value="ECO:0000353"/>
    <property type="project" value="AgBase"/>
</dbReference>
<dbReference type="GO" id="GO:0043167">
    <property type="term" value="F:ion binding"/>
    <property type="evidence" value="ECO:0000304"/>
    <property type="project" value="AgBase"/>
</dbReference>
<dbReference type="GO" id="GO:0001530">
    <property type="term" value="F:lipopolysaccharide binding"/>
    <property type="evidence" value="ECO:0000314"/>
    <property type="project" value="AgBase"/>
</dbReference>
<dbReference type="GO" id="GO:0042834">
    <property type="term" value="F:peptidoglycan binding"/>
    <property type="evidence" value="ECO:0000314"/>
    <property type="project" value="AgBase"/>
</dbReference>
<dbReference type="GO" id="GO:0038023">
    <property type="term" value="F:signaling receptor activity"/>
    <property type="evidence" value="ECO:0000318"/>
    <property type="project" value="GO_Central"/>
</dbReference>
<dbReference type="GO" id="GO:0019731">
    <property type="term" value="P:antibacterial humoral response"/>
    <property type="evidence" value="ECO:0000314"/>
    <property type="project" value="AgBase"/>
</dbReference>
<dbReference type="GO" id="GO:0019730">
    <property type="term" value="P:antimicrobial humoral response"/>
    <property type="evidence" value="ECO:0000314"/>
    <property type="project" value="AgBase"/>
</dbReference>
<dbReference type="GO" id="GO:0031214">
    <property type="term" value="P:biomineral tissue development"/>
    <property type="evidence" value="ECO:0000314"/>
    <property type="project" value="AgBase"/>
</dbReference>
<dbReference type="GO" id="GO:0031215">
    <property type="term" value="P:shell calcification"/>
    <property type="evidence" value="ECO:0000304"/>
    <property type="project" value="AgBase"/>
</dbReference>
<dbReference type="CDD" id="cd03594">
    <property type="entry name" value="CLECT_REG-1_like"/>
    <property type="match status" value="1"/>
</dbReference>
<dbReference type="Gene3D" id="3.10.100.10">
    <property type="entry name" value="Mannose-Binding Protein A, subunit A"/>
    <property type="match status" value="1"/>
</dbReference>
<dbReference type="InterPro" id="IPR001304">
    <property type="entry name" value="C-type_lectin-like"/>
</dbReference>
<dbReference type="InterPro" id="IPR016186">
    <property type="entry name" value="C-type_lectin-like/link_sf"/>
</dbReference>
<dbReference type="InterPro" id="IPR050111">
    <property type="entry name" value="C-type_lectin/snaclec_domain"/>
</dbReference>
<dbReference type="InterPro" id="IPR016187">
    <property type="entry name" value="CTDL_fold"/>
</dbReference>
<dbReference type="PANTHER" id="PTHR22803">
    <property type="entry name" value="MANNOSE, PHOSPHOLIPASE, LECTIN RECEPTOR RELATED"/>
    <property type="match status" value="1"/>
</dbReference>
<dbReference type="Pfam" id="PF00059">
    <property type="entry name" value="Lectin_C"/>
    <property type="match status" value="1"/>
</dbReference>
<dbReference type="PRINTS" id="PR01504">
    <property type="entry name" value="PNCREATITSAP"/>
</dbReference>
<dbReference type="SMART" id="SM00034">
    <property type="entry name" value="CLECT"/>
    <property type="match status" value="1"/>
</dbReference>
<dbReference type="SUPFAM" id="SSF56436">
    <property type="entry name" value="C-type lectin-like"/>
    <property type="match status" value="1"/>
</dbReference>
<dbReference type="PROSITE" id="PS50041">
    <property type="entry name" value="C_TYPE_LECTIN_2"/>
    <property type="match status" value="1"/>
</dbReference>
<feature type="chain" id="PRO_0000046687" description="Ovocleidin-17">
    <location>
        <begin position="1"/>
        <end position="142"/>
    </location>
</feature>
<feature type="domain" description="C-type lectin" evidence="2">
    <location>
        <begin position="12"/>
        <end position="139"/>
    </location>
</feature>
<feature type="modified residue" description="Phosphoserine" evidence="3">
    <location>
        <position position="61"/>
    </location>
</feature>
<feature type="modified residue" description="Phosphoserine" evidence="3">
    <location>
        <position position="67"/>
    </location>
</feature>
<feature type="glycosylation site" description="N-linked (GlcNAc...) asparagine" evidence="1">
    <location>
        <position position="59"/>
    </location>
</feature>
<feature type="disulfide bond" evidence="2 3">
    <location>
        <begin position="5"/>
        <end position="16"/>
    </location>
</feature>
<feature type="disulfide bond" evidence="2 3">
    <location>
        <begin position="33"/>
        <end position="138"/>
    </location>
</feature>
<feature type="disulfide bond" evidence="2 3">
    <location>
        <begin position="113"/>
        <end position="130"/>
    </location>
</feature>
<feature type="strand" evidence="7">
    <location>
        <begin position="10"/>
        <end position="12"/>
    </location>
</feature>
<feature type="strand" evidence="7">
    <location>
        <begin position="15"/>
        <end position="24"/>
    </location>
</feature>
<feature type="helix" evidence="7">
    <location>
        <begin position="26"/>
        <end position="34"/>
    </location>
</feature>
<feature type="strand" evidence="7">
    <location>
        <begin position="40"/>
        <end position="42"/>
    </location>
</feature>
<feature type="helix" evidence="7">
    <location>
        <begin position="48"/>
        <end position="59"/>
    </location>
</feature>
<feature type="strand" evidence="7">
    <location>
        <begin position="65"/>
        <end position="67"/>
    </location>
</feature>
<feature type="strand" evidence="7">
    <location>
        <begin position="75"/>
        <end position="80"/>
    </location>
</feature>
<feature type="strand" evidence="7">
    <location>
        <begin position="103"/>
        <end position="105"/>
    </location>
</feature>
<feature type="helix" evidence="7">
    <location>
        <begin position="106"/>
        <end position="108"/>
    </location>
</feature>
<feature type="strand" evidence="7">
    <location>
        <begin position="112"/>
        <end position="116"/>
    </location>
</feature>
<feature type="turn" evidence="7">
    <location>
        <begin position="118"/>
        <end position="121"/>
    </location>
</feature>
<feature type="strand" evidence="7">
    <location>
        <begin position="125"/>
        <end position="128"/>
    </location>
</feature>
<feature type="strand" evidence="7">
    <location>
        <begin position="134"/>
        <end position="141"/>
    </location>
</feature>
<proteinExistence type="evidence at protein level"/>
<organism>
    <name type="scientific">Gallus gallus</name>
    <name type="common">Chicken</name>
    <dbReference type="NCBI Taxonomy" id="9031"/>
    <lineage>
        <taxon>Eukaryota</taxon>
        <taxon>Metazoa</taxon>
        <taxon>Chordata</taxon>
        <taxon>Craniata</taxon>
        <taxon>Vertebrata</taxon>
        <taxon>Euteleostomi</taxon>
        <taxon>Archelosauria</taxon>
        <taxon>Archosauria</taxon>
        <taxon>Dinosauria</taxon>
        <taxon>Saurischia</taxon>
        <taxon>Theropoda</taxon>
        <taxon>Coelurosauria</taxon>
        <taxon>Aves</taxon>
        <taxon>Neognathae</taxon>
        <taxon>Galloanserae</taxon>
        <taxon>Galliformes</taxon>
        <taxon>Phasianidae</taxon>
        <taxon>Phasianinae</taxon>
        <taxon>Gallus</taxon>
    </lineage>
</organism>
<evidence type="ECO:0000255" key="1"/>
<evidence type="ECO:0000255" key="2">
    <source>
        <dbReference type="PROSITE-ProRule" id="PRU00040"/>
    </source>
</evidence>
<evidence type="ECO:0000269" key="3">
    <source>
    </source>
</evidence>
<evidence type="ECO:0000269" key="4">
    <source>
    </source>
</evidence>
<evidence type="ECO:0000303" key="5">
    <source>
    </source>
</evidence>
<evidence type="ECO:0000305" key="6"/>
<evidence type="ECO:0007829" key="7">
    <source>
        <dbReference type="PDB" id="1GZ2"/>
    </source>
</evidence>
<comment type="function">
    <text evidence="5">May form proteinaceous networks during the construction of the eggshell which then may control the deposition of the mineral phase.</text>
</comment>
<comment type="subcellular location">
    <subcellularLocation>
        <location evidence="4">Secreted</location>
        <location evidence="4">Extracellular space</location>
        <location evidence="4">Extracellular matrix</location>
    </subcellularLocation>
    <text>Eggshell matrix. Mostly in the mammillary bodies.</text>
</comment>
<comment type="tissue specificity">
    <text evidence="4">Expressed in the shell gland mucosa. Not detected in hen liver, magnum, isthmus, cartilage, bone or in egg white or yolk.</text>
</comment>
<comment type="mass spectrometry" mass="15453.8" error="2.0" method="Electrospray" evidence="3"/>
<sequence length="142" mass="15300">DPDGCGPGWVPTPGGCLGFFSRELSWSRAESFCRRWGPGSHLAAVRSAAELRLLAELLNASRGGDGSGEGADGRVWIGLHRPAGSRSWRWSDGTAPRFASWHRTAKARRGGRCAALRDEEAFTSWAARPCTERNAFVCKAAA</sequence>
<name>OC17_CHICK</name>